<gene>
    <name evidence="1" type="primary">ndk</name>
    <name type="ordered locus">Meso_1979</name>
</gene>
<reference key="1">
    <citation type="submission" date="2006-06" db="EMBL/GenBank/DDBJ databases">
        <title>Complete sequence of chromosome of Mesorhizobium sp. BNC1.</title>
        <authorList>
            <consortium name="US DOE Joint Genome Institute"/>
            <person name="Copeland A."/>
            <person name="Lucas S."/>
            <person name="Lapidus A."/>
            <person name="Barry K."/>
            <person name="Detter J.C."/>
            <person name="Glavina del Rio T."/>
            <person name="Hammon N."/>
            <person name="Israni S."/>
            <person name="Dalin E."/>
            <person name="Tice H."/>
            <person name="Pitluck S."/>
            <person name="Chertkov O."/>
            <person name="Brettin T."/>
            <person name="Bruce D."/>
            <person name="Han C."/>
            <person name="Tapia R."/>
            <person name="Gilna P."/>
            <person name="Schmutz J."/>
            <person name="Larimer F."/>
            <person name="Land M."/>
            <person name="Hauser L."/>
            <person name="Kyrpides N."/>
            <person name="Mikhailova N."/>
            <person name="Richardson P."/>
        </authorList>
    </citation>
    <scope>NUCLEOTIDE SEQUENCE [LARGE SCALE GENOMIC DNA]</scope>
    <source>
        <strain>BNC1</strain>
    </source>
</reference>
<sequence length="140" mass="15500">MAIERTFSMIKPDATKRNLTGAITKMLEDAGLKVVASKRVWMSRRQAEGFYAVHKDRPFFDELCEFMSSGPTVIQVLEGENAIAKNREVMGATNPANAAEGTIRKVFALSIGENSVHGSDAPETAEQEIRYWFSETEIVG</sequence>
<name>NDK_CHESB</name>
<organism>
    <name type="scientific">Chelativorans sp. (strain BNC1)</name>
    <dbReference type="NCBI Taxonomy" id="266779"/>
    <lineage>
        <taxon>Bacteria</taxon>
        <taxon>Pseudomonadati</taxon>
        <taxon>Pseudomonadota</taxon>
        <taxon>Alphaproteobacteria</taxon>
        <taxon>Hyphomicrobiales</taxon>
        <taxon>Phyllobacteriaceae</taxon>
        <taxon>Chelativorans</taxon>
    </lineage>
</organism>
<comment type="function">
    <text evidence="1">Major role in the synthesis of nucleoside triphosphates other than ATP. The ATP gamma phosphate is transferred to the NDP beta phosphate via a ping-pong mechanism, using a phosphorylated active-site intermediate.</text>
</comment>
<comment type="catalytic activity">
    <reaction evidence="1">
        <text>a 2'-deoxyribonucleoside 5'-diphosphate + ATP = a 2'-deoxyribonucleoside 5'-triphosphate + ADP</text>
        <dbReference type="Rhea" id="RHEA:44640"/>
        <dbReference type="ChEBI" id="CHEBI:30616"/>
        <dbReference type="ChEBI" id="CHEBI:61560"/>
        <dbReference type="ChEBI" id="CHEBI:73316"/>
        <dbReference type="ChEBI" id="CHEBI:456216"/>
        <dbReference type="EC" id="2.7.4.6"/>
    </reaction>
</comment>
<comment type="catalytic activity">
    <reaction evidence="1">
        <text>a ribonucleoside 5'-diphosphate + ATP = a ribonucleoside 5'-triphosphate + ADP</text>
        <dbReference type="Rhea" id="RHEA:18113"/>
        <dbReference type="ChEBI" id="CHEBI:30616"/>
        <dbReference type="ChEBI" id="CHEBI:57930"/>
        <dbReference type="ChEBI" id="CHEBI:61557"/>
        <dbReference type="ChEBI" id="CHEBI:456216"/>
        <dbReference type="EC" id="2.7.4.6"/>
    </reaction>
</comment>
<comment type="cofactor">
    <cofactor evidence="1">
        <name>Mg(2+)</name>
        <dbReference type="ChEBI" id="CHEBI:18420"/>
    </cofactor>
</comment>
<comment type="subunit">
    <text evidence="1">Homotetramer.</text>
</comment>
<comment type="subcellular location">
    <subcellularLocation>
        <location evidence="1">Cytoplasm</location>
    </subcellularLocation>
</comment>
<comment type="similarity">
    <text evidence="1">Belongs to the NDK family.</text>
</comment>
<proteinExistence type="inferred from homology"/>
<feature type="chain" id="PRO_0000267787" description="Nucleoside diphosphate kinase">
    <location>
        <begin position="1"/>
        <end position="140"/>
    </location>
</feature>
<feature type="active site" description="Pros-phosphohistidine intermediate" evidence="1">
    <location>
        <position position="117"/>
    </location>
</feature>
<feature type="binding site" evidence="1">
    <location>
        <position position="11"/>
    </location>
    <ligand>
        <name>ATP</name>
        <dbReference type="ChEBI" id="CHEBI:30616"/>
    </ligand>
</feature>
<feature type="binding site" evidence="1">
    <location>
        <position position="59"/>
    </location>
    <ligand>
        <name>ATP</name>
        <dbReference type="ChEBI" id="CHEBI:30616"/>
    </ligand>
</feature>
<feature type="binding site" evidence="1">
    <location>
        <position position="87"/>
    </location>
    <ligand>
        <name>ATP</name>
        <dbReference type="ChEBI" id="CHEBI:30616"/>
    </ligand>
</feature>
<feature type="binding site" evidence="1">
    <location>
        <position position="93"/>
    </location>
    <ligand>
        <name>ATP</name>
        <dbReference type="ChEBI" id="CHEBI:30616"/>
    </ligand>
</feature>
<feature type="binding site" evidence="1">
    <location>
        <position position="104"/>
    </location>
    <ligand>
        <name>ATP</name>
        <dbReference type="ChEBI" id="CHEBI:30616"/>
    </ligand>
</feature>
<feature type="binding site" evidence="1">
    <location>
        <position position="114"/>
    </location>
    <ligand>
        <name>ATP</name>
        <dbReference type="ChEBI" id="CHEBI:30616"/>
    </ligand>
</feature>
<accession>Q11GV3</accession>
<keyword id="KW-0067">ATP-binding</keyword>
<keyword id="KW-0963">Cytoplasm</keyword>
<keyword id="KW-0418">Kinase</keyword>
<keyword id="KW-0460">Magnesium</keyword>
<keyword id="KW-0479">Metal-binding</keyword>
<keyword id="KW-0546">Nucleotide metabolism</keyword>
<keyword id="KW-0547">Nucleotide-binding</keyword>
<keyword id="KW-0597">Phosphoprotein</keyword>
<keyword id="KW-0808">Transferase</keyword>
<protein>
    <recommendedName>
        <fullName evidence="1">Nucleoside diphosphate kinase</fullName>
        <shortName evidence="1">NDK</shortName>
        <shortName evidence="1">NDP kinase</shortName>
        <ecNumber evidence="1">2.7.4.6</ecNumber>
    </recommendedName>
    <alternativeName>
        <fullName evidence="1">Nucleoside-2-P kinase</fullName>
    </alternativeName>
</protein>
<evidence type="ECO:0000255" key="1">
    <source>
        <dbReference type="HAMAP-Rule" id="MF_00451"/>
    </source>
</evidence>
<dbReference type="EC" id="2.7.4.6" evidence="1"/>
<dbReference type="EMBL" id="CP000390">
    <property type="protein sequence ID" value="ABG63372.1"/>
    <property type="molecule type" value="Genomic_DNA"/>
</dbReference>
<dbReference type="SMR" id="Q11GV3"/>
<dbReference type="STRING" id="266779.Meso_1979"/>
<dbReference type="KEGG" id="mes:Meso_1979"/>
<dbReference type="eggNOG" id="COG0105">
    <property type="taxonomic scope" value="Bacteria"/>
</dbReference>
<dbReference type="HOGENOM" id="CLU_060216_8_1_5"/>
<dbReference type="OrthoDB" id="9801161at2"/>
<dbReference type="GO" id="GO:0005737">
    <property type="term" value="C:cytoplasm"/>
    <property type="evidence" value="ECO:0007669"/>
    <property type="project" value="UniProtKB-SubCell"/>
</dbReference>
<dbReference type="GO" id="GO:0005524">
    <property type="term" value="F:ATP binding"/>
    <property type="evidence" value="ECO:0007669"/>
    <property type="project" value="UniProtKB-UniRule"/>
</dbReference>
<dbReference type="GO" id="GO:0046872">
    <property type="term" value="F:metal ion binding"/>
    <property type="evidence" value="ECO:0007669"/>
    <property type="project" value="UniProtKB-KW"/>
</dbReference>
<dbReference type="GO" id="GO:0004550">
    <property type="term" value="F:nucleoside diphosphate kinase activity"/>
    <property type="evidence" value="ECO:0007669"/>
    <property type="project" value="UniProtKB-UniRule"/>
</dbReference>
<dbReference type="GO" id="GO:0006241">
    <property type="term" value="P:CTP biosynthetic process"/>
    <property type="evidence" value="ECO:0007669"/>
    <property type="project" value="UniProtKB-UniRule"/>
</dbReference>
<dbReference type="GO" id="GO:0006183">
    <property type="term" value="P:GTP biosynthetic process"/>
    <property type="evidence" value="ECO:0007669"/>
    <property type="project" value="UniProtKB-UniRule"/>
</dbReference>
<dbReference type="GO" id="GO:0006228">
    <property type="term" value="P:UTP biosynthetic process"/>
    <property type="evidence" value="ECO:0007669"/>
    <property type="project" value="UniProtKB-UniRule"/>
</dbReference>
<dbReference type="CDD" id="cd04413">
    <property type="entry name" value="NDPk_I"/>
    <property type="match status" value="1"/>
</dbReference>
<dbReference type="FunFam" id="3.30.70.141:FF:000001">
    <property type="entry name" value="Nucleoside diphosphate kinase"/>
    <property type="match status" value="1"/>
</dbReference>
<dbReference type="Gene3D" id="3.30.70.141">
    <property type="entry name" value="Nucleoside diphosphate kinase-like domain"/>
    <property type="match status" value="1"/>
</dbReference>
<dbReference type="HAMAP" id="MF_00451">
    <property type="entry name" value="NDP_kinase"/>
    <property type="match status" value="1"/>
</dbReference>
<dbReference type="InterPro" id="IPR034907">
    <property type="entry name" value="NDK-like_dom"/>
</dbReference>
<dbReference type="InterPro" id="IPR036850">
    <property type="entry name" value="NDK-like_dom_sf"/>
</dbReference>
<dbReference type="InterPro" id="IPR001564">
    <property type="entry name" value="Nucleoside_diP_kinase"/>
</dbReference>
<dbReference type="InterPro" id="IPR023005">
    <property type="entry name" value="Nucleoside_diP_kinase_AS"/>
</dbReference>
<dbReference type="NCBIfam" id="NF001908">
    <property type="entry name" value="PRK00668.1"/>
    <property type="match status" value="1"/>
</dbReference>
<dbReference type="PANTHER" id="PTHR11349">
    <property type="entry name" value="NUCLEOSIDE DIPHOSPHATE KINASE"/>
    <property type="match status" value="1"/>
</dbReference>
<dbReference type="Pfam" id="PF00334">
    <property type="entry name" value="NDK"/>
    <property type="match status" value="1"/>
</dbReference>
<dbReference type="PRINTS" id="PR01243">
    <property type="entry name" value="NUCDPKINASE"/>
</dbReference>
<dbReference type="SMART" id="SM00562">
    <property type="entry name" value="NDK"/>
    <property type="match status" value="1"/>
</dbReference>
<dbReference type="SUPFAM" id="SSF54919">
    <property type="entry name" value="Nucleoside diphosphate kinase, NDK"/>
    <property type="match status" value="1"/>
</dbReference>
<dbReference type="PROSITE" id="PS00469">
    <property type="entry name" value="NDPK"/>
    <property type="match status" value="1"/>
</dbReference>
<dbReference type="PROSITE" id="PS51374">
    <property type="entry name" value="NDPK_LIKE"/>
    <property type="match status" value="1"/>
</dbReference>